<name>FOLD2_DEIGD</name>
<organism>
    <name type="scientific">Deinococcus geothermalis (strain DSM 11300 / CIP 105573 / AG-3a)</name>
    <dbReference type="NCBI Taxonomy" id="319795"/>
    <lineage>
        <taxon>Bacteria</taxon>
        <taxon>Thermotogati</taxon>
        <taxon>Deinococcota</taxon>
        <taxon>Deinococci</taxon>
        <taxon>Deinococcales</taxon>
        <taxon>Deinococcaceae</taxon>
        <taxon>Deinococcus</taxon>
    </lineage>
</organism>
<evidence type="ECO:0000255" key="1">
    <source>
        <dbReference type="HAMAP-Rule" id="MF_01576"/>
    </source>
</evidence>
<reference key="1">
    <citation type="submission" date="2006-04" db="EMBL/GenBank/DDBJ databases">
        <title>Complete sequence of chromosome of Deinococcus geothermalis DSM 11300.</title>
        <authorList>
            <person name="Copeland A."/>
            <person name="Lucas S."/>
            <person name="Lapidus A."/>
            <person name="Barry K."/>
            <person name="Detter J.C."/>
            <person name="Glavina del Rio T."/>
            <person name="Hammon N."/>
            <person name="Israni S."/>
            <person name="Dalin E."/>
            <person name="Tice H."/>
            <person name="Pitluck S."/>
            <person name="Brettin T."/>
            <person name="Bruce D."/>
            <person name="Han C."/>
            <person name="Tapia R."/>
            <person name="Saunders E."/>
            <person name="Gilna P."/>
            <person name="Schmutz J."/>
            <person name="Larimer F."/>
            <person name="Land M."/>
            <person name="Hauser L."/>
            <person name="Kyrpides N."/>
            <person name="Kim E."/>
            <person name="Daly M.J."/>
            <person name="Fredrickson J.K."/>
            <person name="Makarova K.S."/>
            <person name="Gaidamakova E.K."/>
            <person name="Zhai M."/>
            <person name="Richardson P."/>
        </authorList>
    </citation>
    <scope>NUCLEOTIDE SEQUENCE [LARGE SCALE GENOMIC DNA]</scope>
    <source>
        <strain>DSM 11300 / CIP 105573 / AG-3a</strain>
    </source>
</reference>
<comment type="function">
    <text evidence="1">Catalyzes the oxidation of 5,10-methylenetetrahydrofolate to 5,10-methenyltetrahydrofolate and then the hydrolysis of 5,10-methenyltetrahydrofolate to 10-formyltetrahydrofolate.</text>
</comment>
<comment type="catalytic activity">
    <reaction evidence="1">
        <text>(6R)-5,10-methylene-5,6,7,8-tetrahydrofolate + NADP(+) = (6R)-5,10-methenyltetrahydrofolate + NADPH</text>
        <dbReference type="Rhea" id="RHEA:22812"/>
        <dbReference type="ChEBI" id="CHEBI:15636"/>
        <dbReference type="ChEBI" id="CHEBI:57455"/>
        <dbReference type="ChEBI" id="CHEBI:57783"/>
        <dbReference type="ChEBI" id="CHEBI:58349"/>
        <dbReference type="EC" id="1.5.1.5"/>
    </reaction>
</comment>
<comment type="catalytic activity">
    <reaction evidence="1">
        <text>(6R)-5,10-methenyltetrahydrofolate + H2O = (6R)-10-formyltetrahydrofolate + H(+)</text>
        <dbReference type="Rhea" id="RHEA:23700"/>
        <dbReference type="ChEBI" id="CHEBI:15377"/>
        <dbReference type="ChEBI" id="CHEBI:15378"/>
        <dbReference type="ChEBI" id="CHEBI:57455"/>
        <dbReference type="ChEBI" id="CHEBI:195366"/>
        <dbReference type="EC" id="3.5.4.9"/>
    </reaction>
</comment>
<comment type="pathway">
    <text evidence="1">One-carbon metabolism; tetrahydrofolate interconversion.</text>
</comment>
<comment type="subunit">
    <text evidence="1">Homodimer.</text>
</comment>
<comment type="similarity">
    <text evidence="1">Belongs to the tetrahydrofolate dehydrogenase/cyclohydrolase family.</text>
</comment>
<dbReference type="EC" id="1.5.1.5" evidence="1"/>
<dbReference type="EC" id="3.5.4.9" evidence="1"/>
<dbReference type="EMBL" id="CP000359">
    <property type="protein sequence ID" value="ABF45001.1"/>
    <property type="molecule type" value="Genomic_DNA"/>
</dbReference>
<dbReference type="RefSeq" id="WP_011529842.1">
    <property type="nucleotide sequence ID" value="NC_008025.1"/>
</dbReference>
<dbReference type="SMR" id="Q1J0I3"/>
<dbReference type="STRING" id="319795.Dgeo_0699"/>
<dbReference type="KEGG" id="dge:Dgeo_0699"/>
<dbReference type="eggNOG" id="COG0190">
    <property type="taxonomic scope" value="Bacteria"/>
</dbReference>
<dbReference type="HOGENOM" id="CLU_034045_2_1_0"/>
<dbReference type="UniPathway" id="UPA00193"/>
<dbReference type="Proteomes" id="UP000002431">
    <property type="component" value="Chromosome"/>
</dbReference>
<dbReference type="GO" id="GO:0005829">
    <property type="term" value="C:cytosol"/>
    <property type="evidence" value="ECO:0007669"/>
    <property type="project" value="TreeGrafter"/>
</dbReference>
<dbReference type="GO" id="GO:0004477">
    <property type="term" value="F:methenyltetrahydrofolate cyclohydrolase activity"/>
    <property type="evidence" value="ECO:0007669"/>
    <property type="project" value="UniProtKB-UniRule"/>
</dbReference>
<dbReference type="GO" id="GO:0004488">
    <property type="term" value="F:methylenetetrahydrofolate dehydrogenase (NADP+) activity"/>
    <property type="evidence" value="ECO:0007669"/>
    <property type="project" value="UniProtKB-UniRule"/>
</dbReference>
<dbReference type="GO" id="GO:0000105">
    <property type="term" value="P:L-histidine biosynthetic process"/>
    <property type="evidence" value="ECO:0007669"/>
    <property type="project" value="UniProtKB-KW"/>
</dbReference>
<dbReference type="GO" id="GO:0009086">
    <property type="term" value="P:methionine biosynthetic process"/>
    <property type="evidence" value="ECO:0007669"/>
    <property type="project" value="UniProtKB-KW"/>
</dbReference>
<dbReference type="GO" id="GO:0006164">
    <property type="term" value="P:purine nucleotide biosynthetic process"/>
    <property type="evidence" value="ECO:0007669"/>
    <property type="project" value="UniProtKB-KW"/>
</dbReference>
<dbReference type="GO" id="GO:0035999">
    <property type="term" value="P:tetrahydrofolate interconversion"/>
    <property type="evidence" value="ECO:0007669"/>
    <property type="project" value="UniProtKB-UniRule"/>
</dbReference>
<dbReference type="CDD" id="cd01080">
    <property type="entry name" value="NAD_bind_m-THF_DH_Cyclohyd"/>
    <property type="match status" value="1"/>
</dbReference>
<dbReference type="FunFam" id="3.40.50.720:FF:000094">
    <property type="entry name" value="Bifunctional protein FolD"/>
    <property type="match status" value="1"/>
</dbReference>
<dbReference type="FunFam" id="3.40.50.10860:FF:000005">
    <property type="entry name" value="C-1-tetrahydrofolate synthase, cytoplasmic, putative"/>
    <property type="match status" value="1"/>
</dbReference>
<dbReference type="Gene3D" id="3.40.50.10860">
    <property type="entry name" value="Leucine Dehydrogenase, chain A, domain 1"/>
    <property type="match status" value="1"/>
</dbReference>
<dbReference type="Gene3D" id="3.40.50.720">
    <property type="entry name" value="NAD(P)-binding Rossmann-like Domain"/>
    <property type="match status" value="1"/>
</dbReference>
<dbReference type="HAMAP" id="MF_01576">
    <property type="entry name" value="THF_DHG_CYH"/>
    <property type="match status" value="1"/>
</dbReference>
<dbReference type="InterPro" id="IPR046346">
    <property type="entry name" value="Aminoacid_DH-like_N_sf"/>
</dbReference>
<dbReference type="InterPro" id="IPR036291">
    <property type="entry name" value="NAD(P)-bd_dom_sf"/>
</dbReference>
<dbReference type="InterPro" id="IPR000672">
    <property type="entry name" value="THF_DH/CycHdrlase"/>
</dbReference>
<dbReference type="InterPro" id="IPR020630">
    <property type="entry name" value="THF_DH/CycHdrlase_cat_dom"/>
</dbReference>
<dbReference type="InterPro" id="IPR020867">
    <property type="entry name" value="THF_DH/CycHdrlase_CS"/>
</dbReference>
<dbReference type="InterPro" id="IPR020631">
    <property type="entry name" value="THF_DH/CycHdrlase_NAD-bd_dom"/>
</dbReference>
<dbReference type="NCBIfam" id="NF010770">
    <property type="entry name" value="PRK14173.1"/>
    <property type="match status" value="1"/>
</dbReference>
<dbReference type="PANTHER" id="PTHR48099:SF5">
    <property type="entry name" value="C-1-TETRAHYDROFOLATE SYNTHASE, CYTOPLASMIC"/>
    <property type="match status" value="1"/>
</dbReference>
<dbReference type="PANTHER" id="PTHR48099">
    <property type="entry name" value="C-1-TETRAHYDROFOLATE SYNTHASE, CYTOPLASMIC-RELATED"/>
    <property type="match status" value="1"/>
</dbReference>
<dbReference type="Pfam" id="PF00763">
    <property type="entry name" value="THF_DHG_CYH"/>
    <property type="match status" value="1"/>
</dbReference>
<dbReference type="Pfam" id="PF02882">
    <property type="entry name" value="THF_DHG_CYH_C"/>
    <property type="match status" value="1"/>
</dbReference>
<dbReference type="PRINTS" id="PR00085">
    <property type="entry name" value="THFDHDRGNASE"/>
</dbReference>
<dbReference type="SUPFAM" id="SSF53223">
    <property type="entry name" value="Aminoacid dehydrogenase-like, N-terminal domain"/>
    <property type="match status" value="1"/>
</dbReference>
<dbReference type="SUPFAM" id="SSF51735">
    <property type="entry name" value="NAD(P)-binding Rossmann-fold domains"/>
    <property type="match status" value="1"/>
</dbReference>
<dbReference type="PROSITE" id="PS00766">
    <property type="entry name" value="THF_DHG_CYH_1"/>
    <property type="match status" value="1"/>
</dbReference>
<dbReference type="PROSITE" id="PS00767">
    <property type="entry name" value="THF_DHG_CYH_2"/>
    <property type="match status" value="1"/>
</dbReference>
<keyword id="KW-0028">Amino-acid biosynthesis</keyword>
<keyword id="KW-0368">Histidine biosynthesis</keyword>
<keyword id="KW-0378">Hydrolase</keyword>
<keyword id="KW-0486">Methionine biosynthesis</keyword>
<keyword id="KW-0511">Multifunctional enzyme</keyword>
<keyword id="KW-0521">NADP</keyword>
<keyword id="KW-0554">One-carbon metabolism</keyword>
<keyword id="KW-0560">Oxidoreductase</keyword>
<keyword id="KW-0658">Purine biosynthesis</keyword>
<accession>Q1J0I3</accession>
<proteinExistence type="inferred from homology"/>
<sequence length="289" mass="30103">MTARLLRGGPAADALLAEATARAARLPAPPQLVMLRLGEDPASVSYVRGKDRKAREVGLKSTVYALPETTSQAELLDLIARLNADDTVNGILVQLPLPLHIQEQAVLHAIDPRKDVDGFHPLNVGELWAGRPALRPCTPAGILYLLDHYGIPVAGQRAVVVGRSSIVGRPLAGLLLHRDATVTVAHSRTPDLGAVTREADLLCVAVGRPHLITPDMVRPGATVVDVGINRVLGEGGGKAQLTGDVAPEVAQVAGAITPVPGGVGPMTIAQLLANTVLAAELQAKGRAAR</sequence>
<gene>
    <name evidence="1" type="primary">folD2</name>
    <name type="ordered locus">Dgeo_0699</name>
</gene>
<protein>
    <recommendedName>
        <fullName evidence="1">Bifunctional protein FolD 2</fullName>
    </recommendedName>
    <domain>
        <recommendedName>
            <fullName evidence="1">Methylenetetrahydrofolate dehydrogenase</fullName>
            <ecNumber evidence="1">1.5.1.5</ecNumber>
        </recommendedName>
    </domain>
    <domain>
        <recommendedName>
            <fullName evidence="1">Methenyltetrahydrofolate cyclohydrolase</fullName>
            <ecNumber evidence="1">3.5.4.9</ecNumber>
        </recommendedName>
    </domain>
</protein>
<feature type="chain" id="PRO_0000268333" description="Bifunctional protein FolD 2">
    <location>
        <begin position="1"/>
        <end position="289"/>
    </location>
</feature>
<feature type="binding site" evidence="1">
    <location>
        <begin position="162"/>
        <end position="164"/>
    </location>
    <ligand>
        <name>NADP(+)</name>
        <dbReference type="ChEBI" id="CHEBI:58349"/>
    </ligand>
</feature>
<feature type="binding site" evidence="1">
    <location>
        <position position="187"/>
    </location>
    <ligand>
        <name>NADP(+)</name>
        <dbReference type="ChEBI" id="CHEBI:58349"/>
    </ligand>
</feature>
<feature type="binding site" evidence="1">
    <location>
        <position position="228"/>
    </location>
    <ligand>
        <name>NADP(+)</name>
        <dbReference type="ChEBI" id="CHEBI:58349"/>
    </ligand>
</feature>